<feature type="transit peptide" description="Mitochondrion" evidence="2">
    <location>
        <begin position="1"/>
        <end position="17"/>
    </location>
</feature>
<feature type="chain" id="PRO_0000406679" description="MICOS complex subunit MIC60">
    <location>
        <begin position="18"/>
        <end position="563"/>
    </location>
</feature>
<feature type="topological domain" description="Mitochondrial matrix" evidence="2">
    <location>
        <begin position="18"/>
        <end position="68"/>
    </location>
</feature>
<feature type="transmembrane region" description="Helical" evidence="2">
    <location>
        <begin position="69"/>
        <end position="89"/>
    </location>
</feature>
<feature type="topological domain" description="Mitochondrial intermembrane" evidence="2">
    <location>
        <begin position="90"/>
        <end position="563"/>
    </location>
</feature>
<feature type="region of interest" description="Disordered" evidence="3">
    <location>
        <begin position="23"/>
        <end position="59"/>
    </location>
</feature>
<feature type="region of interest" description="Disordered" evidence="3">
    <location>
        <begin position="128"/>
        <end position="170"/>
    </location>
</feature>
<feature type="region of interest" description="Disordered" evidence="3">
    <location>
        <begin position="178"/>
        <end position="197"/>
    </location>
</feature>
<feature type="coiled-coil region" evidence="2">
    <location>
        <begin position="239"/>
        <end position="379"/>
    </location>
</feature>
<feature type="compositionally biased region" description="Low complexity" evidence="3">
    <location>
        <begin position="38"/>
        <end position="51"/>
    </location>
</feature>
<feature type="compositionally biased region" description="Low complexity" evidence="3">
    <location>
        <begin position="149"/>
        <end position="170"/>
    </location>
</feature>
<feature type="compositionally biased region" description="Low complexity" evidence="3">
    <location>
        <begin position="178"/>
        <end position="190"/>
    </location>
</feature>
<protein>
    <recommendedName>
        <fullName>MICOS complex subunit MIC60</fullName>
    </recommendedName>
    <alternativeName>
        <fullName>Mitofilin</fullName>
    </alternativeName>
</protein>
<proteinExistence type="inferred from homology"/>
<accession>Q6C060</accession>
<sequence length="563" mass="59881">MIRATAMHRSIVQRRMLSTASRLQQAAKPATGSTVGTANGASAASGKPPGATFEGASKQKKKTHKFRNFVLLSTFVGAGAFAGGVYYSLQNDQFQSLFVEYVPAAEHAINYIEEQQLRSGRLKIATPTSKHDVDQSTVRVPKSGATWRAVDSTDAATSAKSASSPAANVAKDVASPAPAATASPVSSGSPKTDNTTVPAVRLANDSDPAVKAAVQTFNDLIAVAPSGAAKQLSAKVSTVVDQLQHNVAQIKSEAAEEAKNSINKLNSELAKLKASTGEEISSKVSAAEQQLRNEFAALRAHSEKVYHDRLRVEIEATKSLVSSHANNLIQAVEAERQKQYAQEIAERVETEREGRLSKLKDLQTSLTQLQDLALKTEQAVDASGRTAALHLAIAKLTGALKGSEPVALGPYVESIRRAAGDDPLLQAALDSIPEVAQTEGVLTPAQLTIRFKLLEPELRKSSLVPVNAGVAGHLGSLIFSSLLFKKSGVPKGDDVESVLARANIALEQGKLYDAVAEVNTLKGWPRKLASDWLDEGRRRTEIEFLADVIAEEGKLYGALSSKK</sequence>
<comment type="function">
    <text evidence="1">Component of the MICOS complex, a large protein complex of the mitochondrial inner membrane that plays crucial roles in the maintenance of crista junctions, inner membrane architecture, and formation of contact sites to the outer membrane. Plays a role in keeping cristae membranes connected to the inner boundary membrane. Also promotes protein import via the mitochondrial intermembrane space assembly (MIA) pathway (By similarity).</text>
</comment>
<comment type="subunit">
    <text evidence="1">Component of the mitochondrial contact site and cristae organizing system (MICOS) complex.</text>
</comment>
<comment type="subcellular location">
    <subcellularLocation>
        <location evidence="1">Mitochondrion inner membrane</location>
        <topology evidence="1">Single-pass membrane protein</topology>
    </subcellularLocation>
</comment>
<comment type="similarity">
    <text evidence="4">Belongs to the MICOS complex subunit Mic60 family.</text>
</comment>
<gene>
    <name type="primary">MIC60</name>
    <name type="ordered locus">YALI0F27555g</name>
</gene>
<organism>
    <name type="scientific">Yarrowia lipolytica (strain CLIB 122 / E 150)</name>
    <name type="common">Yeast</name>
    <name type="synonym">Candida lipolytica</name>
    <dbReference type="NCBI Taxonomy" id="284591"/>
    <lineage>
        <taxon>Eukaryota</taxon>
        <taxon>Fungi</taxon>
        <taxon>Dikarya</taxon>
        <taxon>Ascomycota</taxon>
        <taxon>Saccharomycotina</taxon>
        <taxon>Dipodascomycetes</taxon>
        <taxon>Dipodascales</taxon>
        <taxon>Dipodascales incertae sedis</taxon>
        <taxon>Yarrowia</taxon>
    </lineage>
</organism>
<name>MIC60_YARLI</name>
<evidence type="ECO:0000250" key="1"/>
<evidence type="ECO:0000255" key="2"/>
<evidence type="ECO:0000256" key="3">
    <source>
        <dbReference type="SAM" id="MobiDB-lite"/>
    </source>
</evidence>
<evidence type="ECO:0000305" key="4"/>
<reference key="1">
    <citation type="journal article" date="2004" name="Nature">
        <title>Genome evolution in yeasts.</title>
        <authorList>
            <person name="Dujon B."/>
            <person name="Sherman D."/>
            <person name="Fischer G."/>
            <person name="Durrens P."/>
            <person name="Casaregola S."/>
            <person name="Lafontaine I."/>
            <person name="de Montigny J."/>
            <person name="Marck C."/>
            <person name="Neuveglise C."/>
            <person name="Talla E."/>
            <person name="Goffard N."/>
            <person name="Frangeul L."/>
            <person name="Aigle M."/>
            <person name="Anthouard V."/>
            <person name="Babour A."/>
            <person name="Barbe V."/>
            <person name="Barnay S."/>
            <person name="Blanchin S."/>
            <person name="Beckerich J.-M."/>
            <person name="Beyne E."/>
            <person name="Bleykasten C."/>
            <person name="Boisrame A."/>
            <person name="Boyer J."/>
            <person name="Cattolico L."/>
            <person name="Confanioleri F."/>
            <person name="de Daruvar A."/>
            <person name="Despons L."/>
            <person name="Fabre E."/>
            <person name="Fairhead C."/>
            <person name="Ferry-Dumazet H."/>
            <person name="Groppi A."/>
            <person name="Hantraye F."/>
            <person name="Hennequin C."/>
            <person name="Jauniaux N."/>
            <person name="Joyet P."/>
            <person name="Kachouri R."/>
            <person name="Kerrest A."/>
            <person name="Koszul R."/>
            <person name="Lemaire M."/>
            <person name="Lesur I."/>
            <person name="Ma L."/>
            <person name="Muller H."/>
            <person name="Nicaud J.-M."/>
            <person name="Nikolski M."/>
            <person name="Oztas S."/>
            <person name="Ozier-Kalogeropoulos O."/>
            <person name="Pellenz S."/>
            <person name="Potier S."/>
            <person name="Richard G.-F."/>
            <person name="Straub M.-L."/>
            <person name="Suleau A."/>
            <person name="Swennen D."/>
            <person name="Tekaia F."/>
            <person name="Wesolowski-Louvel M."/>
            <person name="Westhof E."/>
            <person name="Wirth B."/>
            <person name="Zeniou-Meyer M."/>
            <person name="Zivanovic Y."/>
            <person name="Bolotin-Fukuhara M."/>
            <person name="Thierry A."/>
            <person name="Bouchier C."/>
            <person name="Caudron B."/>
            <person name="Scarpelli C."/>
            <person name="Gaillardin C."/>
            <person name="Weissenbach J."/>
            <person name="Wincker P."/>
            <person name="Souciet J.-L."/>
        </authorList>
    </citation>
    <scope>NUCLEOTIDE SEQUENCE [LARGE SCALE GENOMIC DNA]</scope>
    <source>
        <strain>CLIB 122 / E 150</strain>
    </source>
</reference>
<dbReference type="EMBL" id="CR382132">
    <property type="protein sequence ID" value="CAG78764.1"/>
    <property type="molecule type" value="Genomic_DNA"/>
</dbReference>
<dbReference type="RefSeq" id="XP_505952.1">
    <property type="nucleotide sequence ID" value="XM_505952.1"/>
</dbReference>
<dbReference type="SMR" id="Q6C060"/>
<dbReference type="FunCoup" id="Q6C060">
    <property type="interactions" value="198"/>
</dbReference>
<dbReference type="STRING" id="284591.Q6C060"/>
<dbReference type="EnsemblFungi" id="CAG78764">
    <property type="protein sequence ID" value="CAG78764"/>
    <property type="gene ID" value="YALI0_F27555g"/>
</dbReference>
<dbReference type="KEGG" id="yli:2909051"/>
<dbReference type="VEuPathDB" id="FungiDB:YALI0_F27555g"/>
<dbReference type="HOGENOM" id="CLU_008024_1_2_1"/>
<dbReference type="InParanoid" id="Q6C060"/>
<dbReference type="OMA" id="RLDHQMQ"/>
<dbReference type="OrthoDB" id="99784at4891"/>
<dbReference type="Proteomes" id="UP000001300">
    <property type="component" value="Chromosome F"/>
</dbReference>
<dbReference type="GO" id="GO:0061617">
    <property type="term" value="C:MICOS complex"/>
    <property type="evidence" value="ECO:0000318"/>
    <property type="project" value="GO_Central"/>
</dbReference>
<dbReference type="GO" id="GO:0042407">
    <property type="term" value="P:cristae formation"/>
    <property type="evidence" value="ECO:0000318"/>
    <property type="project" value="GO_Central"/>
</dbReference>
<dbReference type="InterPro" id="IPR019133">
    <property type="entry name" value="MIC60"/>
</dbReference>
<dbReference type="PANTHER" id="PTHR15415:SF7">
    <property type="entry name" value="MICOS COMPLEX SUBUNIT MIC60"/>
    <property type="match status" value="1"/>
</dbReference>
<dbReference type="PANTHER" id="PTHR15415">
    <property type="entry name" value="MITOFILIN"/>
    <property type="match status" value="1"/>
</dbReference>
<dbReference type="Pfam" id="PF09731">
    <property type="entry name" value="Mitofilin"/>
    <property type="match status" value="2"/>
</dbReference>
<keyword id="KW-0175">Coiled coil</keyword>
<keyword id="KW-0472">Membrane</keyword>
<keyword id="KW-0496">Mitochondrion</keyword>
<keyword id="KW-0999">Mitochondrion inner membrane</keyword>
<keyword id="KW-1185">Reference proteome</keyword>
<keyword id="KW-0809">Transit peptide</keyword>
<keyword id="KW-0812">Transmembrane</keyword>
<keyword id="KW-1133">Transmembrane helix</keyword>